<dbReference type="EMBL" id="AE016820">
    <property type="protein sequence ID" value="AAS54694.2"/>
    <property type="molecule type" value="Genomic_DNA"/>
</dbReference>
<dbReference type="RefSeq" id="NP_986870.2">
    <property type="nucleotide sequence ID" value="NM_211932.2"/>
</dbReference>
<dbReference type="SMR" id="Q74ZJ6"/>
<dbReference type="FunCoup" id="Q74ZJ6">
    <property type="interactions" value="103"/>
</dbReference>
<dbReference type="STRING" id="284811.Q74ZJ6"/>
<dbReference type="EnsemblFungi" id="AAS54694">
    <property type="protein sequence ID" value="AAS54694"/>
    <property type="gene ID" value="AGOS_AGR204W"/>
</dbReference>
<dbReference type="GeneID" id="4623172"/>
<dbReference type="KEGG" id="ago:AGOS_AGR204W"/>
<dbReference type="eggNOG" id="KOG2220">
    <property type="taxonomic scope" value="Eukaryota"/>
</dbReference>
<dbReference type="HOGENOM" id="CLU_321635_0_0_1"/>
<dbReference type="InParanoid" id="Q74ZJ6"/>
<dbReference type="OMA" id="YLKRSYG"/>
<dbReference type="OrthoDB" id="2141925at2759"/>
<dbReference type="Proteomes" id="UP000000591">
    <property type="component" value="Chromosome VII"/>
</dbReference>
<dbReference type="GO" id="GO:0005768">
    <property type="term" value="C:endosome"/>
    <property type="evidence" value="ECO:0000318"/>
    <property type="project" value="GO_Central"/>
</dbReference>
<dbReference type="GO" id="GO:0043328">
    <property type="term" value="P:protein transport to vacuole involved in ubiquitin-dependent protein catabolic process via the multivesicular body sorting pathway"/>
    <property type="evidence" value="ECO:0000318"/>
    <property type="project" value="GO_Central"/>
</dbReference>
<dbReference type="CDD" id="cd09242">
    <property type="entry name" value="BRO1_ScBro1_like"/>
    <property type="match status" value="1"/>
</dbReference>
<dbReference type="CDD" id="cd09237">
    <property type="entry name" value="V_ScBro1_like"/>
    <property type="match status" value="1"/>
</dbReference>
<dbReference type="Gene3D" id="1.20.120.560">
    <property type="entry name" value="alix/aip1 in complex with the ypdl late domain"/>
    <property type="match status" value="1"/>
</dbReference>
<dbReference type="Gene3D" id="1.20.140.50">
    <property type="entry name" value="alix/aip1 like domains"/>
    <property type="match status" value="1"/>
</dbReference>
<dbReference type="Gene3D" id="1.25.40.280">
    <property type="entry name" value="alix/aip1 like domains"/>
    <property type="match status" value="1"/>
</dbReference>
<dbReference type="InterPro" id="IPR025304">
    <property type="entry name" value="ALIX_V_dom"/>
</dbReference>
<dbReference type="InterPro" id="IPR004328">
    <property type="entry name" value="BRO1_dom"/>
</dbReference>
<dbReference type="InterPro" id="IPR038499">
    <property type="entry name" value="BRO1_sf"/>
</dbReference>
<dbReference type="PANTHER" id="PTHR23030">
    <property type="entry name" value="PCD6 INTERACTING PROTEIN-RELATED"/>
    <property type="match status" value="1"/>
</dbReference>
<dbReference type="PANTHER" id="PTHR23030:SF30">
    <property type="entry name" value="TYROSINE-PROTEIN PHOSPHATASE NON-RECEPTOR TYPE 23"/>
    <property type="match status" value="1"/>
</dbReference>
<dbReference type="Pfam" id="PF13949">
    <property type="entry name" value="ALIX_LYPXL_bnd"/>
    <property type="match status" value="1"/>
</dbReference>
<dbReference type="Pfam" id="PF03097">
    <property type="entry name" value="BRO1"/>
    <property type="match status" value="1"/>
</dbReference>
<dbReference type="SMART" id="SM01041">
    <property type="entry name" value="BRO1"/>
    <property type="match status" value="1"/>
</dbReference>
<dbReference type="PROSITE" id="PS51180">
    <property type="entry name" value="BRO1"/>
    <property type="match status" value="1"/>
</dbReference>
<protein>
    <recommendedName>
        <fullName>Vacuolar protein-sorting protein BRO1</fullName>
    </recommendedName>
    <alternativeName>
        <fullName>BRO domain-containing protein 1</fullName>
    </alternativeName>
</protein>
<accession>Q74ZJ6</accession>
<comment type="function">
    <text evidence="1">Involved in concentration and sorting of cargo proteins of the multivesicular body (MVB) for incorporation into intralumenal vesicles.</text>
</comment>
<comment type="subcellular location">
    <subcellularLocation>
        <location evidence="1">Cytoplasm</location>
    </subcellularLocation>
    <subcellularLocation>
        <location evidence="1">Endosome</location>
    </subcellularLocation>
</comment>
<comment type="similarity">
    <text evidence="5">Belongs to the BRO1 family.</text>
</comment>
<name>BRO1_EREGS</name>
<feature type="chain" id="PRO_0000218859" description="Vacuolar protein-sorting protein BRO1">
    <location>
        <begin position="1"/>
        <end position="834"/>
    </location>
</feature>
<feature type="domain" description="BRO1" evidence="3">
    <location>
        <begin position="4"/>
        <end position="409"/>
    </location>
</feature>
<feature type="region of interest" description="Disordered" evidence="4">
    <location>
        <begin position="730"/>
        <end position="761"/>
    </location>
</feature>
<feature type="region of interest" description="Disordered" evidence="4">
    <location>
        <begin position="774"/>
        <end position="822"/>
    </location>
</feature>
<feature type="coiled-coil region" evidence="2">
    <location>
        <begin position="551"/>
        <end position="590"/>
    </location>
</feature>
<feature type="compositionally biased region" description="Pro residues" evidence="4">
    <location>
        <begin position="742"/>
        <end position="757"/>
    </location>
</feature>
<feature type="compositionally biased region" description="Polar residues" evidence="4">
    <location>
        <begin position="812"/>
        <end position="822"/>
    </location>
</feature>
<gene>
    <name type="primary">BRO1</name>
    <name type="ordered locus">AGR204W</name>
</gene>
<organism>
    <name type="scientific">Eremothecium gossypii (strain ATCC 10895 / CBS 109.51 / FGSC 9923 / NRRL Y-1056)</name>
    <name type="common">Yeast</name>
    <name type="synonym">Ashbya gossypii</name>
    <dbReference type="NCBI Taxonomy" id="284811"/>
    <lineage>
        <taxon>Eukaryota</taxon>
        <taxon>Fungi</taxon>
        <taxon>Dikarya</taxon>
        <taxon>Ascomycota</taxon>
        <taxon>Saccharomycotina</taxon>
        <taxon>Saccharomycetes</taxon>
        <taxon>Saccharomycetales</taxon>
        <taxon>Saccharomycetaceae</taxon>
        <taxon>Eremothecium</taxon>
    </lineage>
</organism>
<proteinExistence type="inferred from homology"/>
<sequence>MKTALIGLKLKDTEPLDWSKALASYLKRNYGQHQWSQFYDDKKSAELDQLRISANSDLGLEALLEQNLRYYGFLEQLYLRLGSQSVQLKLDYTWYDAEHGMNGGQKYKQHTLVFEKSSTLFNIGVLLAQLAGEQLRASYKEAIPQLARAVACFEYMSETFLNSPSVDLQAENTGFLAALLHAEAQELFLLNVINGGDAARRASLLCRLSYTCARFYRKCVEFYKADGADEAAAAVPYGEAKWRDVVNMKMHLYEGVAAYNSALVLEQAGKIGHAVGLLEKAAASMATANTHRKALQGTAYLRDEVDLDGISSVVNEKLKTTAKDNDYIYHDHVPSDISLDSTKLMDAIKVPEFDAVVGPYLEAATETCNDLFRGIVPMAVYERESMYTEEKTQLLRREVDAVEQADWEYQSFVDFTNLPKLLDDLERRFLDTSSSSEDAEVVHMREQLQSWADAVRQSSFNDIEQQSKNILRTRNDIMALLSSVPPENKEDVVKIKSSLLQASQSDEKLFSQVKPYVNEIQLLNNPTLLWNNFNTFTTSQPTPDLLDLDHSKADEVLAKIRQIRQLYENLKLLKEERTSIMKDLKDLVNQDDITKQLILNNNKSDSQIKTLFQEELEKFRPFGSRIEATVFKQGNTIKDIKIGLDTIFKLADVQEKTSAQKQAASQRKEFFSKLQKAATAFKLFETDLPKGLSFYDLLYKMTKEMHDLSVTKRTTDSDLASNMAGLNISSSKETAKYNPQPLTAPPLAPRTYMPPPQAYNRNLDIRNANTYGNNLNAGSLGQRPRLPQKIPTGISGLETQNDPKLSEEESIRNPTNFYNTPSVFNESMYSKFSH</sequence>
<evidence type="ECO:0000250" key="1"/>
<evidence type="ECO:0000255" key="2"/>
<evidence type="ECO:0000255" key="3">
    <source>
        <dbReference type="PROSITE-ProRule" id="PRU00526"/>
    </source>
</evidence>
<evidence type="ECO:0000256" key="4">
    <source>
        <dbReference type="SAM" id="MobiDB-lite"/>
    </source>
</evidence>
<evidence type="ECO:0000305" key="5"/>
<keyword id="KW-0175">Coiled coil</keyword>
<keyword id="KW-0963">Cytoplasm</keyword>
<keyword id="KW-0967">Endosome</keyword>
<keyword id="KW-0653">Protein transport</keyword>
<keyword id="KW-1185">Reference proteome</keyword>
<keyword id="KW-0813">Transport</keyword>
<reference key="1">
    <citation type="journal article" date="2004" name="Science">
        <title>The Ashbya gossypii genome as a tool for mapping the ancient Saccharomyces cerevisiae genome.</title>
        <authorList>
            <person name="Dietrich F.S."/>
            <person name="Voegeli S."/>
            <person name="Brachat S."/>
            <person name="Lerch A."/>
            <person name="Gates K."/>
            <person name="Steiner S."/>
            <person name="Mohr C."/>
            <person name="Poehlmann R."/>
            <person name="Luedi P."/>
            <person name="Choi S."/>
            <person name="Wing R.A."/>
            <person name="Flavier A."/>
            <person name="Gaffney T.D."/>
            <person name="Philippsen P."/>
        </authorList>
    </citation>
    <scope>NUCLEOTIDE SEQUENCE [LARGE SCALE GENOMIC DNA]</scope>
    <source>
        <strain>ATCC 10895 / CBS 109.51 / FGSC 9923 / NRRL Y-1056</strain>
    </source>
</reference>
<reference key="2">
    <citation type="journal article" date="2013" name="G3 (Bethesda)">
        <title>Genomes of Ashbya fungi isolated from insects reveal four mating-type loci, numerous translocations, lack of transposons, and distinct gene duplications.</title>
        <authorList>
            <person name="Dietrich F.S."/>
            <person name="Voegeli S."/>
            <person name="Kuo S."/>
            <person name="Philippsen P."/>
        </authorList>
    </citation>
    <scope>GENOME REANNOTATION</scope>
    <scope>SEQUENCE REVISION TO 239 AND 755</scope>
    <source>
        <strain>ATCC 10895 / CBS 109.51 / FGSC 9923 / NRRL Y-1056</strain>
    </source>
</reference>